<sequence length="483" mass="54858">MEEGGGGVRSLVPGGPVLLVLCGLLEASGGGRALPQLSDDIPFRVNWPGTEFSLPTTGVLYKEDNYVIMTTAHKEKYKCILPLVTSGDEEEEKDYKGPNPRELLEPLFKQSSCSYRIESYWTYEVCHGKHIRQYHEEKETGQKINIHEYYLGNMLAKNLLFEKEREAEEKEKSNEIPTKNIEGQMTPYYPVGMGNGTPCSLKQNRPRSSTVMYICHPESKHEILSVAEVTTCEYEVVILTPLLCSHPKYRFRASPVNDIFCQSLPGSPFKPLTLRQLEQQEEILRVPFRRNKEEDLQSTKEERFPAIHKSIAIGSQPVLTVGTTHISKLTDDQLIKEFLSGSYCFRGGVGWWKYEFCYGKHVHQYHEDKDSGKTSVVVGTWNQEEHIEWAKKNTARAYHLQDDGTQTVRMVSHFYGNGDICDITDKPRQVTVKLKCKESDSPHAVTVYMLEPHSCQYILGVESPVICKILDTADENGLLSLPN</sequence>
<comment type="function">
    <text evidence="3 4 5">Probable lectin that binds selectively to improperly folded lumenal proteins. May function in endoplasmic reticulum quality control and endoplasmic reticulum-associated degradation (ERAD) of both non-glycosylated proteins and glycoproteins.</text>
</comment>
<comment type="subunit">
    <text evidence="3 4 5">May form a complex with OS9, HSPA5, SYVN1, and SEL1L with which it interacts directly. Interacts (via PRKCSH 2 domain) with KREMEN2 (when glycosylated). Interacts with HSPA5.</text>
</comment>
<comment type="subcellular location">
    <subcellularLocation>
        <location evidence="3 5">Endoplasmic reticulum lumen</location>
    </subcellularLocation>
</comment>
<comment type="alternative products">
    <event type="alternative splicing"/>
    <isoform>
        <id>Q96DZ1-1</id>
        <name>1</name>
        <name>hXTP3B-long</name>
        <sequence type="displayed"/>
    </isoform>
    <isoform>
        <id>Q96DZ1-2</id>
        <name>2</name>
        <name>hXTP3B-short</name>
        <sequence type="described" ref="VSP_015790"/>
    </isoform>
    <isoform>
        <id>Q96DZ1-3</id>
        <name>3</name>
        <sequence type="described" ref="VSP_047155"/>
    </isoform>
</comment>
<comment type="PTM">
    <text evidence="5">Isoform 1 and isoform 2 are N-glycosylated.</text>
</comment>
<evidence type="ECO:0000255" key="1"/>
<evidence type="ECO:0000255" key="2">
    <source>
        <dbReference type="PROSITE-ProRule" id="PRU01262"/>
    </source>
</evidence>
<evidence type="ECO:0000269" key="3">
    <source>
    </source>
</evidence>
<evidence type="ECO:0000269" key="4">
    <source>
    </source>
</evidence>
<evidence type="ECO:0000269" key="5">
    <source>
    </source>
</evidence>
<evidence type="ECO:0000303" key="6">
    <source>
    </source>
</evidence>
<evidence type="ECO:0000303" key="7">
    <source>
    </source>
</evidence>
<evidence type="ECO:0000305" key="8"/>
<organism>
    <name type="scientific">Homo sapiens</name>
    <name type="common">Human</name>
    <dbReference type="NCBI Taxonomy" id="9606"/>
    <lineage>
        <taxon>Eukaryota</taxon>
        <taxon>Metazoa</taxon>
        <taxon>Chordata</taxon>
        <taxon>Craniata</taxon>
        <taxon>Vertebrata</taxon>
        <taxon>Euteleostomi</taxon>
        <taxon>Mammalia</taxon>
        <taxon>Eutheria</taxon>
        <taxon>Euarchontoglires</taxon>
        <taxon>Primates</taxon>
        <taxon>Haplorrhini</taxon>
        <taxon>Catarrhini</taxon>
        <taxon>Hominidae</taxon>
        <taxon>Homo</taxon>
    </lineage>
</organism>
<gene>
    <name type="primary">ERLEC1</name>
    <name type="synonym">C2orf30</name>
    <name type="synonym">XTP3TPB</name>
    <name type="ORF">UNQ1878/PRO4321</name>
</gene>
<reference key="1">
    <citation type="submission" date="2003-10" db="EMBL/GenBank/DDBJ databases">
        <title>Screening and cloning of the target genes transactivated by XTP3 using a suppression subtractive hybridization technique.</title>
        <authorList>
            <person name="Wang C."/>
            <person name="Cheng J."/>
            <person name="Lang Z."/>
            <person name="Wu Y."/>
            <person name="Yang Y."/>
            <person name="Zhang L."/>
            <person name="Ji D."/>
        </authorList>
    </citation>
    <scope>NUCLEOTIDE SEQUENCE [MRNA] (ISOFORM 1)</scope>
</reference>
<reference key="2">
    <citation type="journal article" date="2003" name="Genome Res.">
        <title>The secreted protein discovery initiative (SPDI), a large-scale effort to identify novel human secreted and transmembrane proteins: a bioinformatics assessment.</title>
        <authorList>
            <person name="Clark H.F."/>
            <person name="Gurney A.L."/>
            <person name="Abaya E."/>
            <person name="Baker K."/>
            <person name="Baldwin D.T."/>
            <person name="Brush J."/>
            <person name="Chen J."/>
            <person name="Chow B."/>
            <person name="Chui C."/>
            <person name="Crowley C."/>
            <person name="Currell B."/>
            <person name="Deuel B."/>
            <person name="Dowd P."/>
            <person name="Eaton D."/>
            <person name="Foster J.S."/>
            <person name="Grimaldi C."/>
            <person name="Gu Q."/>
            <person name="Hass P.E."/>
            <person name="Heldens S."/>
            <person name="Huang A."/>
            <person name="Kim H.S."/>
            <person name="Klimowski L."/>
            <person name="Jin Y."/>
            <person name="Johnson S."/>
            <person name="Lee J."/>
            <person name="Lewis L."/>
            <person name="Liao D."/>
            <person name="Mark M.R."/>
            <person name="Robbie E."/>
            <person name="Sanchez C."/>
            <person name="Schoenfeld J."/>
            <person name="Seshagiri S."/>
            <person name="Simmons L."/>
            <person name="Singh J."/>
            <person name="Smith V."/>
            <person name="Stinson J."/>
            <person name="Vagts A."/>
            <person name="Vandlen R.L."/>
            <person name="Watanabe C."/>
            <person name="Wieand D."/>
            <person name="Woods K."/>
            <person name="Xie M.-H."/>
            <person name="Yansura D.G."/>
            <person name="Yi S."/>
            <person name="Yu G."/>
            <person name="Yuan J."/>
            <person name="Zhang M."/>
            <person name="Zhang Z."/>
            <person name="Goddard A.D."/>
            <person name="Wood W.I."/>
            <person name="Godowski P.J."/>
            <person name="Gray A.M."/>
        </authorList>
    </citation>
    <scope>NUCLEOTIDE SEQUENCE [LARGE SCALE MRNA] (ISOFORM 2)</scope>
</reference>
<reference key="3">
    <citation type="journal article" date="2004" name="Nat. Genet.">
        <title>Complete sequencing and characterization of 21,243 full-length human cDNAs.</title>
        <authorList>
            <person name="Ota T."/>
            <person name="Suzuki Y."/>
            <person name="Nishikawa T."/>
            <person name="Otsuki T."/>
            <person name="Sugiyama T."/>
            <person name="Irie R."/>
            <person name="Wakamatsu A."/>
            <person name="Hayashi K."/>
            <person name="Sato H."/>
            <person name="Nagai K."/>
            <person name="Kimura K."/>
            <person name="Makita H."/>
            <person name="Sekine M."/>
            <person name="Obayashi M."/>
            <person name="Nishi T."/>
            <person name="Shibahara T."/>
            <person name="Tanaka T."/>
            <person name="Ishii S."/>
            <person name="Yamamoto J."/>
            <person name="Saito K."/>
            <person name="Kawai Y."/>
            <person name="Isono Y."/>
            <person name="Nakamura Y."/>
            <person name="Nagahari K."/>
            <person name="Murakami K."/>
            <person name="Yasuda T."/>
            <person name="Iwayanagi T."/>
            <person name="Wagatsuma M."/>
            <person name="Shiratori A."/>
            <person name="Sudo H."/>
            <person name="Hosoiri T."/>
            <person name="Kaku Y."/>
            <person name="Kodaira H."/>
            <person name="Kondo H."/>
            <person name="Sugawara M."/>
            <person name="Takahashi M."/>
            <person name="Kanda K."/>
            <person name="Yokoi T."/>
            <person name="Furuya T."/>
            <person name="Kikkawa E."/>
            <person name="Omura Y."/>
            <person name="Abe K."/>
            <person name="Kamihara K."/>
            <person name="Katsuta N."/>
            <person name="Sato K."/>
            <person name="Tanikawa M."/>
            <person name="Yamazaki M."/>
            <person name="Ninomiya K."/>
            <person name="Ishibashi T."/>
            <person name="Yamashita H."/>
            <person name="Murakawa K."/>
            <person name="Fujimori K."/>
            <person name="Tanai H."/>
            <person name="Kimata M."/>
            <person name="Watanabe M."/>
            <person name="Hiraoka S."/>
            <person name="Chiba Y."/>
            <person name="Ishida S."/>
            <person name="Ono Y."/>
            <person name="Takiguchi S."/>
            <person name="Watanabe S."/>
            <person name="Yosida M."/>
            <person name="Hotuta T."/>
            <person name="Kusano J."/>
            <person name="Kanehori K."/>
            <person name="Takahashi-Fujii A."/>
            <person name="Hara H."/>
            <person name="Tanase T.-O."/>
            <person name="Nomura Y."/>
            <person name="Togiya S."/>
            <person name="Komai F."/>
            <person name="Hara R."/>
            <person name="Takeuchi K."/>
            <person name="Arita M."/>
            <person name="Imose N."/>
            <person name="Musashino K."/>
            <person name="Yuuki H."/>
            <person name="Oshima A."/>
            <person name="Sasaki N."/>
            <person name="Aotsuka S."/>
            <person name="Yoshikawa Y."/>
            <person name="Matsunawa H."/>
            <person name="Ichihara T."/>
            <person name="Shiohata N."/>
            <person name="Sano S."/>
            <person name="Moriya S."/>
            <person name="Momiyama H."/>
            <person name="Satoh N."/>
            <person name="Takami S."/>
            <person name="Terashima Y."/>
            <person name="Suzuki O."/>
            <person name="Nakagawa S."/>
            <person name="Senoh A."/>
            <person name="Mizoguchi H."/>
            <person name="Goto Y."/>
            <person name="Shimizu F."/>
            <person name="Wakebe H."/>
            <person name="Hishigaki H."/>
            <person name="Watanabe T."/>
            <person name="Sugiyama A."/>
            <person name="Takemoto M."/>
            <person name="Kawakami B."/>
            <person name="Yamazaki M."/>
            <person name="Watanabe K."/>
            <person name="Kumagai A."/>
            <person name="Itakura S."/>
            <person name="Fukuzumi Y."/>
            <person name="Fujimori Y."/>
            <person name="Komiyama M."/>
            <person name="Tashiro H."/>
            <person name="Tanigami A."/>
            <person name="Fujiwara T."/>
            <person name="Ono T."/>
            <person name="Yamada K."/>
            <person name="Fujii Y."/>
            <person name="Ozaki K."/>
            <person name="Hirao M."/>
            <person name="Ohmori Y."/>
            <person name="Kawabata A."/>
            <person name="Hikiji T."/>
            <person name="Kobatake N."/>
            <person name="Inagaki H."/>
            <person name="Ikema Y."/>
            <person name="Okamoto S."/>
            <person name="Okitani R."/>
            <person name="Kawakami T."/>
            <person name="Noguchi S."/>
            <person name="Itoh T."/>
            <person name="Shigeta K."/>
            <person name="Senba T."/>
            <person name="Matsumura K."/>
            <person name="Nakajima Y."/>
            <person name="Mizuno T."/>
            <person name="Morinaga M."/>
            <person name="Sasaki M."/>
            <person name="Togashi T."/>
            <person name="Oyama M."/>
            <person name="Hata H."/>
            <person name="Watanabe M."/>
            <person name="Komatsu T."/>
            <person name="Mizushima-Sugano J."/>
            <person name="Satoh T."/>
            <person name="Shirai Y."/>
            <person name="Takahashi Y."/>
            <person name="Nakagawa K."/>
            <person name="Okumura K."/>
            <person name="Nagase T."/>
            <person name="Nomura N."/>
            <person name="Kikuchi H."/>
            <person name="Masuho Y."/>
            <person name="Yamashita R."/>
            <person name="Nakai K."/>
            <person name="Yada T."/>
            <person name="Nakamura Y."/>
            <person name="Ohara O."/>
            <person name="Isogai T."/>
            <person name="Sugano S."/>
        </authorList>
    </citation>
    <scope>NUCLEOTIDE SEQUENCE [LARGE SCALE MRNA] (ISOFORM 1)</scope>
    <source>
        <tissue>Placenta</tissue>
    </source>
</reference>
<reference key="4">
    <citation type="journal article" date="2005" name="Nature">
        <title>Generation and annotation of the DNA sequences of human chromosomes 2 and 4.</title>
        <authorList>
            <person name="Hillier L.W."/>
            <person name="Graves T.A."/>
            <person name="Fulton R.S."/>
            <person name="Fulton L.A."/>
            <person name="Pepin K.H."/>
            <person name="Minx P."/>
            <person name="Wagner-McPherson C."/>
            <person name="Layman D."/>
            <person name="Wylie K."/>
            <person name="Sekhon M."/>
            <person name="Becker M.C."/>
            <person name="Fewell G.A."/>
            <person name="Delehaunty K.D."/>
            <person name="Miner T.L."/>
            <person name="Nash W.E."/>
            <person name="Kremitzki C."/>
            <person name="Oddy L."/>
            <person name="Du H."/>
            <person name="Sun H."/>
            <person name="Bradshaw-Cordum H."/>
            <person name="Ali J."/>
            <person name="Carter J."/>
            <person name="Cordes M."/>
            <person name="Harris A."/>
            <person name="Isak A."/>
            <person name="van Brunt A."/>
            <person name="Nguyen C."/>
            <person name="Du F."/>
            <person name="Courtney L."/>
            <person name="Kalicki J."/>
            <person name="Ozersky P."/>
            <person name="Abbott S."/>
            <person name="Armstrong J."/>
            <person name="Belter E.A."/>
            <person name="Caruso L."/>
            <person name="Cedroni M."/>
            <person name="Cotton M."/>
            <person name="Davidson T."/>
            <person name="Desai A."/>
            <person name="Elliott G."/>
            <person name="Erb T."/>
            <person name="Fronick C."/>
            <person name="Gaige T."/>
            <person name="Haakenson W."/>
            <person name="Haglund K."/>
            <person name="Holmes A."/>
            <person name="Harkins R."/>
            <person name="Kim K."/>
            <person name="Kruchowski S.S."/>
            <person name="Strong C.M."/>
            <person name="Grewal N."/>
            <person name="Goyea E."/>
            <person name="Hou S."/>
            <person name="Levy A."/>
            <person name="Martinka S."/>
            <person name="Mead K."/>
            <person name="McLellan M.D."/>
            <person name="Meyer R."/>
            <person name="Randall-Maher J."/>
            <person name="Tomlinson C."/>
            <person name="Dauphin-Kohlberg S."/>
            <person name="Kozlowicz-Reilly A."/>
            <person name="Shah N."/>
            <person name="Swearengen-Shahid S."/>
            <person name="Snider J."/>
            <person name="Strong J.T."/>
            <person name="Thompson J."/>
            <person name="Yoakum M."/>
            <person name="Leonard S."/>
            <person name="Pearman C."/>
            <person name="Trani L."/>
            <person name="Radionenko M."/>
            <person name="Waligorski J.E."/>
            <person name="Wang C."/>
            <person name="Rock S.M."/>
            <person name="Tin-Wollam A.-M."/>
            <person name="Maupin R."/>
            <person name="Latreille P."/>
            <person name="Wendl M.C."/>
            <person name="Yang S.-P."/>
            <person name="Pohl C."/>
            <person name="Wallis J.W."/>
            <person name="Spieth J."/>
            <person name="Bieri T.A."/>
            <person name="Berkowicz N."/>
            <person name="Nelson J.O."/>
            <person name="Osborne J."/>
            <person name="Ding L."/>
            <person name="Meyer R."/>
            <person name="Sabo A."/>
            <person name="Shotland Y."/>
            <person name="Sinha P."/>
            <person name="Wohldmann P.E."/>
            <person name="Cook L.L."/>
            <person name="Hickenbotham M.T."/>
            <person name="Eldred J."/>
            <person name="Williams D."/>
            <person name="Jones T.A."/>
            <person name="She X."/>
            <person name="Ciccarelli F.D."/>
            <person name="Izaurralde E."/>
            <person name="Taylor J."/>
            <person name="Schmutz J."/>
            <person name="Myers R.M."/>
            <person name="Cox D.R."/>
            <person name="Huang X."/>
            <person name="McPherson J.D."/>
            <person name="Mardis E.R."/>
            <person name="Clifton S.W."/>
            <person name="Warren W.C."/>
            <person name="Chinwalla A.T."/>
            <person name="Eddy S.R."/>
            <person name="Marra M.A."/>
            <person name="Ovcharenko I."/>
            <person name="Furey T.S."/>
            <person name="Miller W."/>
            <person name="Eichler E.E."/>
            <person name="Bork P."/>
            <person name="Suyama M."/>
            <person name="Torrents D."/>
            <person name="Waterston R.H."/>
            <person name="Wilson R.K."/>
        </authorList>
    </citation>
    <scope>NUCLEOTIDE SEQUENCE [LARGE SCALE GENOMIC DNA]</scope>
</reference>
<reference key="5">
    <citation type="submission" date="2005-09" db="EMBL/GenBank/DDBJ databases">
        <authorList>
            <person name="Mural R.J."/>
            <person name="Istrail S."/>
            <person name="Sutton G.G."/>
            <person name="Florea L."/>
            <person name="Halpern A.L."/>
            <person name="Mobarry C.M."/>
            <person name="Lippert R."/>
            <person name="Walenz B."/>
            <person name="Shatkay H."/>
            <person name="Dew I."/>
            <person name="Miller J.R."/>
            <person name="Flanigan M.J."/>
            <person name="Edwards N.J."/>
            <person name="Bolanos R."/>
            <person name="Fasulo D."/>
            <person name="Halldorsson B.V."/>
            <person name="Hannenhalli S."/>
            <person name="Turner R."/>
            <person name="Yooseph S."/>
            <person name="Lu F."/>
            <person name="Nusskern D.R."/>
            <person name="Shue B.C."/>
            <person name="Zheng X.H."/>
            <person name="Zhong F."/>
            <person name="Delcher A.L."/>
            <person name="Huson D.H."/>
            <person name="Kravitz S.A."/>
            <person name="Mouchard L."/>
            <person name="Reinert K."/>
            <person name="Remington K.A."/>
            <person name="Clark A.G."/>
            <person name="Waterman M.S."/>
            <person name="Eichler E.E."/>
            <person name="Adams M.D."/>
            <person name="Hunkapiller M.W."/>
            <person name="Myers E.W."/>
            <person name="Venter J.C."/>
        </authorList>
    </citation>
    <scope>NUCLEOTIDE SEQUENCE [LARGE SCALE GENOMIC DNA]</scope>
</reference>
<reference key="6">
    <citation type="journal article" date="2004" name="Genome Res.">
        <title>The status, quality, and expansion of the NIH full-length cDNA project: the Mammalian Gene Collection (MGC).</title>
        <authorList>
            <consortium name="The MGC Project Team"/>
        </authorList>
    </citation>
    <scope>NUCLEOTIDE SEQUENCE [LARGE SCALE MRNA] (ISOFORMS 1 AND 2)</scope>
    <source>
        <tissue>Kidney</tissue>
        <tissue>Placenta</tissue>
    </source>
</reference>
<reference key="7">
    <citation type="submission" date="1999-02" db="EMBL/GenBank/DDBJ databases">
        <authorList>
            <person name="Mei G."/>
            <person name="Yu W."/>
            <person name="Gibbs R.A."/>
        </authorList>
    </citation>
    <scope>NUCLEOTIDE SEQUENCE [LARGE SCALE MRNA] OF 178-483</scope>
    <source>
        <tissue>Brain</tissue>
    </source>
</reference>
<reference key="8">
    <citation type="journal article" date="2006" name="J. Biol. Chem.">
        <title>The MRH protein Erlectin is a member of the endoplasmic reticulum synexpression group and functions in N-glycan recognition.</title>
        <authorList>
            <person name="Cruciat C.-M."/>
            <person name="Hassler C."/>
            <person name="Niehrs C."/>
        </authorList>
    </citation>
    <scope>FUNCTION</scope>
    <scope>IDENTIFICATION BY MASS SPECTROMETRY</scope>
    <scope>INTERACTION WITH KREMEN2</scope>
    <scope>SUBCELLULAR LOCATION</scope>
    <scope>MUTAGENESIS OF GLY-379</scope>
</reference>
<reference key="9">
    <citation type="journal article" date="2008" name="J. Biol. Chem.">
        <title>Human XTP3-B forms an endoplasmic reticulum quality control scaffold with the HRD1-SEL1L ubiquitin ligase complex and BiP.</title>
        <authorList>
            <person name="Hosokawa N."/>
            <person name="Wada I."/>
            <person name="Nagasawa K."/>
            <person name="Moriyama T."/>
            <person name="Okawa K."/>
            <person name="Nagata K."/>
        </authorList>
    </citation>
    <scope>FUNCTION IN ERAD</scope>
    <scope>SUBCELLULAR LOCATION</scope>
    <scope>GLYCOSYLATION</scope>
    <scope>INTERACTION WITH HSPA5; OS9; SEL1L AND SYVN1</scope>
</reference>
<reference key="10">
    <citation type="journal article" date="2008" name="Nat. Cell Biol.">
        <title>OS-9 and GRP94 deliver mutant alpha1-antitrypsin to the Hrd1-SEL1L ubiquitin ligase complex for ERAD.</title>
        <authorList>
            <person name="Christianson J.C."/>
            <person name="Shaler T.A."/>
            <person name="Tyler R.E."/>
            <person name="Kopito R.R."/>
        </authorList>
    </citation>
    <scope>FUNCTION</scope>
    <scope>INTERACTION WITH HSPA5; SEL1L AND SYVN1</scope>
    <scope>MUTAGENESIS OF ARG-207 AND ARG-428</scope>
</reference>
<reference key="11">
    <citation type="journal article" date="2015" name="Proteomics">
        <title>N-terminome analysis of the human mitochondrial proteome.</title>
        <authorList>
            <person name="Vaca Jacome A.S."/>
            <person name="Rabilloud T."/>
            <person name="Schaeffer-Reiss C."/>
            <person name="Rompais M."/>
            <person name="Ayoub D."/>
            <person name="Lane L."/>
            <person name="Bairoch A."/>
            <person name="Van Dorsselaer A."/>
            <person name="Carapito C."/>
        </authorList>
    </citation>
    <scope>IDENTIFICATION BY MASS SPECTROMETRY [LARGE SCALE ANALYSIS]</scope>
</reference>
<proteinExistence type="evidence at protein level"/>
<name>ERLEC_HUMAN</name>
<protein>
    <recommendedName>
        <fullName>Endoplasmic reticulum lectin 1</fullName>
    </recommendedName>
    <alternativeName>
        <fullName>ER lectin</fullName>
        <shortName>Erlectin</shortName>
    </alternativeName>
    <alternativeName>
        <fullName>XTP3-transactivated gene B protein</fullName>
    </alternativeName>
</protein>
<feature type="signal peptide" evidence="1">
    <location>
        <begin position="1"/>
        <end position="33"/>
    </location>
</feature>
<feature type="chain" id="PRO_0000042182" description="Endoplasmic reticulum lectin 1">
    <location>
        <begin position="34"/>
        <end position="483"/>
    </location>
</feature>
<feature type="domain" description="MRH 1" evidence="2">
    <location>
        <begin position="111"/>
        <end position="246"/>
    </location>
</feature>
<feature type="domain" description="MRH 2" evidence="2">
    <location>
        <begin position="342"/>
        <end position="469"/>
    </location>
</feature>
<feature type="glycosylation site" description="N-linked (GlcNAc...) asparagine" evidence="1">
    <location>
        <position position="195"/>
    </location>
</feature>
<feature type="disulfide bond" evidence="2">
    <location>
        <begin position="113"/>
        <end position="126"/>
    </location>
</feature>
<feature type="disulfide bond" evidence="2">
    <location>
        <begin position="199"/>
        <end position="232"/>
    </location>
</feature>
<feature type="disulfide bond" evidence="2">
    <location>
        <begin position="215"/>
        <end position="244"/>
    </location>
</feature>
<feature type="disulfide bond" evidence="2">
    <location>
        <begin position="344"/>
        <end position="357"/>
    </location>
</feature>
<feature type="disulfide bond" evidence="2">
    <location>
        <begin position="421"/>
        <end position="455"/>
    </location>
</feature>
<feature type="disulfide bond" evidence="2">
    <location>
        <begin position="436"/>
        <end position="467"/>
    </location>
</feature>
<feature type="splice variant" id="VSP_015790" description="In isoform 2." evidence="6 7">
    <location>
        <begin position="294"/>
        <end position="347"/>
    </location>
</feature>
<feature type="splice variant" id="VSP_047155" description="In isoform 3." evidence="8">
    <location>
        <begin position="410"/>
        <end position="435"/>
    </location>
</feature>
<feature type="sequence variant" id="VAR_051493" description="In dbSNP:rs2287345.">
    <original>V</original>
    <variation>L</variation>
    <location>
        <position position="318"/>
    </location>
</feature>
<feature type="mutagenesis site" description="Abolishes interaction with SEL1L." evidence="4">
    <original>R</original>
    <variation>A</variation>
    <location>
        <position position="207"/>
    </location>
</feature>
<feature type="mutagenesis site" description="Abolishes binding to KREMEN2." evidence="3">
    <original>G</original>
    <variation>S</variation>
    <location>
        <position position="379"/>
    </location>
</feature>
<feature type="mutagenesis site" description="Abolishes interaction with SEL1L." evidence="4">
    <original>R</original>
    <variation>A</variation>
    <location>
        <position position="428"/>
    </location>
</feature>
<feature type="sequence conflict" description="In Ref. 3; BAA91974." evidence="8" ref="3">
    <original>D</original>
    <variation>G</variation>
    <location>
        <position position="331"/>
    </location>
</feature>
<feature type="sequence conflict" description="In Ref. 3; BAA91974." evidence="8" ref="3">
    <original>K</original>
    <variation>E</variation>
    <location>
        <position position="392"/>
    </location>
</feature>
<keyword id="KW-0002">3D-structure</keyword>
<keyword id="KW-0025">Alternative splicing</keyword>
<keyword id="KW-1015">Disulfide bond</keyword>
<keyword id="KW-0256">Endoplasmic reticulum</keyword>
<keyword id="KW-0325">Glycoprotein</keyword>
<keyword id="KW-1267">Proteomics identification</keyword>
<keyword id="KW-1185">Reference proteome</keyword>
<keyword id="KW-0677">Repeat</keyword>
<keyword id="KW-0732">Signal</keyword>
<accession>Q96DZ1</accession>
<accession>B2RDB4</accession>
<accession>B5MC72</accession>
<accession>O95901</accession>
<accession>Q6UWN7</accession>
<accession>Q9NUY7</accession>
<accession>Q9UQL4</accession>
<dbReference type="EMBL" id="AY453410">
    <property type="protein sequence ID" value="AAR26725.1"/>
    <property type="molecule type" value="mRNA"/>
</dbReference>
<dbReference type="EMBL" id="AY358717">
    <property type="protein sequence ID" value="AAQ89079.1"/>
    <property type="molecule type" value="mRNA"/>
</dbReference>
<dbReference type="EMBL" id="AK001913">
    <property type="protein sequence ID" value="BAA91974.1"/>
    <property type="molecule type" value="mRNA"/>
</dbReference>
<dbReference type="EMBL" id="AK315477">
    <property type="protein sequence ID" value="BAG37861.1"/>
    <property type="molecule type" value="mRNA"/>
</dbReference>
<dbReference type="EMBL" id="AC007883">
    <property type="protein sequence ID" value="AAY24352.1"/>
    <property type="molecule type" value="Genomic_DNA"/>
</dbReference>
<dbReference type="EMBL" id="CH471053">
    <property type="protein sequence ID" value="EAX00164.1"/>
    <property type="molecule type" value="Genomic_DNA"/>
</dbReference>
<dbReference type="EMBL" id="BC013129">
    <property type="protein sequence ID" value="AAH13129.1"/>
    <property type="molecule type" value="mRNA"/>
</dbReference>
<dbReference type="EMBL" id="BC022228">
    <property type="protein sequence ID" value="AAH22228.1"/>
    <property type="molecule type" value="mRNA"/>
</dbReference>
<dbReference type="EMBL" id="AF131743">
    <property type="protein sequence ID" value="AAD20029.1"/>
    <property type="molecule type" value="mRNA"/>
</dbReference>
<dbReference type="EMBL" id="AF131849">
    <property type="protein sequence ID" value="AAD20060.1"/>
    <property type="molecule type" value="mRNA"/>
</dbReference>
<dbReference type="CCDS" id="CCDS1848.1">
    <molecule id="Q96DZ1-1"/>
</dbReference>
<dbReference type="CCDS" id="CCDS46283.1">
    <molecule id="Q96DZ1-3"/>
</dbReference>
<dbReference type="CCDS" id="CCDS46284.1">
    <molecule id="Q96DZ1-2"/>
</dbReference>
<dbReference type="RefSeq" id="NP_001120869.1">
    <molecule id="Q96DZ1-3"/>
    <property type="nucleotide sequence ID" value="NM_001127397.3"/>
</dbReference>
<dbReference type="RefSeq" id="NP_001120870.1">
    <molecule id="Q96DZ1-2"/>
    <property type="nucleotide sequence ID" value="NM_001127398.3"/>
</dbReference>
<dbReference type="RefSeq" id="NP_056516.2">
    <molecule id="Q96DZ1-1"/>
    <property type="nucleotide sequence ID" value="NM_015701.4"/>
</dbReference>
<dbReference type="PDB" id="8KES">
    <property type="method" value="EM"/>
    <property type="resolution" value="3.50 A"/>
    <property type="chains" value="E/F=1-483"/>
</dbReference>
<dbReference type="PDB" id="8KET">
    <property type="method" value="EM"/>
    <property type="resolution" value="3.30 A"/>
    <property type="chains" value="F=1-483"/>
</dbReference>
<dbReference type="PDB" id="8KEV">
    <property type="method" value="EM"/>
    <property type="resolution" value="3.50 A"/>
    <property type="chains" value="E/F=1-483"/>
</dbReference>
<dbReference type="PDBsum" id="8KES"/>
<dbReference type="PDBsum" id="8KET"/>
<dbReference type="PDBsum" id="8KEV"/>
<dbReference type="EMDB" id="EMD-37166"/>
<dbReference type="EMDB" id="EMD-37167"/>
<dbReference type="EMDB" id="EMD-37168"/>
<dbReference type="SMR" id="Q96DZ1"/>
<dbReference type="BioGRID" id="118096">
    <property type="interactions" value="192"/>
</dbReference>
<dbReference type="CORUM" id="Q96DZ1"/>
<dbReference type="FunCoup" id="Q96DZ1">
    <property type="interactions" value="2964"/>
</dbReference>
<dbReference type="IntAct" id="Q96DZ1">
    <property type="interactions" value="100"/>
</dbReference>
<dbReference type="MINT" id="Q96DZ1"/>
<dbReference type="STRING" id="9606.ENSP00000185150"/>
<dbReference type="GlyCosmos" id="Q96DZ1">
    <property type="glycosylation" value="1 site, No reported glycans"/>
</dbReference>
<dbReference type="GlyGen" id="Q96DZ1">
    <property type="glycosylation" value="5 sites, 3 N-linked glycans (1 site), 1 O-linked glycan (3 sites)"/>
</dbReference>
<dbReference type="iPTMnet" id="Q96DZ1"/>
<dbReference type="PhosphoSitePlus" id="Q96DZ1"/>
<dbReference type="SwissPalm" id="Q96DZ1"/>
<dbReference type="BioMuta" id="ERLEC1"/>
<dbReference type="DMDM" id="74731510"/>
<dbReference type="jPOST" id="Q96DZ1"/>
<dbReference type="MassIVE" id="Q96DZ1"/>
<dbReference type="PaxDb" id="9606-ENSP00000185150"/>
<dbReference type="PeptideAtlas" id="Q96DZ1"/>
<dbReference type="ProteomicsDB" id="6002"/>
<dbReference type="ProteomicsDB" id="76344">
    <molecule id="Q96DZ1-1"/>
</dbReference>
<dbReference type="ProteomicsDB" id="76345">
    <molecule id="Q96DZ1-2"/>
</dbReference>
<dbReference type="Pumba" id="Q96DZ1"/>
<dbReference type="Antibodypedia" id="30214">
    <property type="antibodies" value="41 antibodies from 14 providers"/>
</dbReference>
<dbReference type="DNASU" id="27248"/>
<dbReference type="Ensembl" id="ENST00000185150.9">
    <molecule id="Q96DZ1-1"/>
    <property type="protein sequence ID" value="ENSP00000185150.4"/>
    <property type="gene ID" value="ENSG00000068912.15"/>
</dbReference>
<dbReference type="Ensembl" id="ENST00000378239.5">
    <molecule id="Q96DZ1-2"/>
    <property type="protein sequence ID" value="ENSP00000367485.5"/>
    <property type="gene ID" value="ENSG00000068912.15"/>
</dbReference>
<dbReference type="Ensembl" id="ENST00000405123.7">
    <molecule id="Q96DZ1-3"/>
    <property type="protein sequence ID" value="ENSP00000385629.3"/>
    <property type="gene ID" value="ENSG00000068912.15"/>
</dbReference>
<dbReference type="GeneID" id="27248"/>
<dbReference type="KEGG" id="hsa:27248"/>
<dbReference type="MANE-Select" id="ENST00000185150.9">
    <property type="protein sequence ID" value="ENSP00000185150.4"/>
    <property type="RefSeq nucleotide sequence ID" value="NM_015701.5"/>
    <property type="RefSeq protein sequence ID" value="NP_056516.2"/>
</dbReference>
<dbReference type="UCSC" id="uc002rxm.4">
    <molecule id="Q96DZ1-1"/>
    <property type="organism name" value="human"/>
</dbReference>
<dbReference type="AGR" id="HGNC:25222"/>
<dbReference type="CTD" id="27248"/>
<dbReference type="DisGeNET" id="27248"/>
<dbReference type="GeneCards" id="ERLEC1"/>
<dbReference type="HGNC" id="HGNC:25222">
    <property type="gene designation" value="ERLEC1"/>
</dbReference>
<dbReference type="HPA" id="ENSG00000068912">
    <property type="expression patterns" value="Low tissue specificity"/>
</dbReference>
<dbReference type="MIM" id="611229">
    <property type="type" value="gene"/>
</dbReference>
<dbReference type="neXtProt" id="NX_Q96DZ1"/>
<dbReference type="OpenTargets" id="ENSG00000068912"/>
<dbReference type="PharmGKB" id="PA165696636"/>
<dbReference type="VEuPathDB" id="HostDB:ENSG00000068912"/>
<dbReference type="eggNOG" id="KOG3394">
    <property type="taxonomic scope" value="Eukaryota"/>
</dbReference>
<dbReference type="GeneTree" id="ENSGT00530000063603"/>
<dbReference type="HOGENOM" id="CLU_048035_1_0_1"/>
<dbReference type="InParanoid" id="Q96DZ1"/>
<dbReference type="OMA" id="HGKDDIY"/>
<dbReference type="OrthoDB" id="239053at2759"/>
<dbReference type="PAN-GO" id="Q96DZ1">
    <property type="GO annotations" value="0 GO annotations based on evolutionary models"/>
</dbReference>
<dbReference type="PhylomeDB" id="Q96DZ1"/>
<dbReference type="TreeFam" id="TF314309"/>
<dbReference type="PathwayCommons" id="Q96DZ1"/>
<dbReference type="Reactome" id="R-HSA-382556">
    <property type="pathway name" value="ABC-family proteins mediated transport"/>
</dbReference>
<dbReference type="Reactome" id="R-HSA-5358346">
    <property type="pathway name" value="Hedgehog ligand biogenesis"/>
</dbReference>
<dbReference type="Reactome" id="R-HSA-5362768">
    <property type="pathway name" value="Hh mutants are degraded by ERAD"/>
</dbReference>
<dbReference type="Reactome" id="R-HSA-5678895">
    <property type="pathway name" value="Defective CFTR causes cystic fibrosis"/>
</dbReference>
<dbReference type="SignaLink" id="Q96DZ1"/>
<dbReference type="BioGRID-ORCS" id="27248">
    <property type="hits" value="18 hits in 1157 CRISPR screens"/>
</dbReference>
<dbReference type="ChiTaRS" id="ERLEC1">
    <property type="organism name" value="human"/>
</dbReference>
<dbReference type="GeneWiki" id="C2orf30"/>
<dbReference type="GenomeRNAi" id="27248"/>
<dbReference type="Pharos" id="Q96DZ1">
    <property type="development level" value="Tbio"/>
</dbReference>
<dbReference type="PRO" id="PR:Q96DZ1"/>
<dbReference type="Proteomes" id="UP000005640">
    <property type="component" value="Chromosome 2"/>
</dbReference>
<dbReference type="RNAct" id="Q96DZ1">
    <property type="molecule type" value="protein"/>
</dbReference>
<dbReference type="Bgee" id="ENSG00000068912">
    <property type="expression patterns" value="Expressed in epithelial cell of pancreas and 193 other cell types or tissues"/>
</dbReference>
<dbReference type="ExpressionAtlas" id="Q96DZ1">
    <property type="expression patterns" value="baseline and differential"/>
</dbReference>
<dbReference type="GO" id="GO:0005788">
    <property type="term" value="C:endoplasmic reticulum lumen"/>
    <property type="evidence" value="ECO:0000314"/>
    <property type="project" value="UniProtKB"/>
</dbReference>
<dbReference type="GO" id="GO:0044322">
    <property type="term" value="C:endoplasmic reticulum quality control compartment"/>
    <property type="evidence" value="ECO:0000304"/>
    <property type="project" value="Reactome"/>
</dbReference>
<dbReference type="GO" id="GO:0051082">
    <property type="term" value="F:unfolded protein binding"/>
    <property type="evidence" value="ECO:0000314"/>
    <property type="project" value="ParkinsonsUK-UCL"/>
</dbReference>
<dbReference type="GO" id="GO:0030968">
    <property type="term" value="P:endoplasmic reticulum unfolded protein response"/>
    <property type="evidence" value="ECO:0007669"/>
    <property type="project" value="InterPro"/>
</dbReference>
<dbReference type="GO" id="GO:0036503">
    <property type="term" value="P:ERAD pathway"/>
    <property type="evidence" value="ECO:0000314"/>
    <property type="project" value="UniProtKB"/>
</dbReference>
<dbReference type="GO" id="GO:1904153">
    <property type="term" value="P:negative regulation of retrograde protein transport, ER to cytosol"/>
    <property type="evidence" value="ECO:0000315"/>
    <property type="project" value="ParkinsonsUK-UCL"/>
</dbReference>
<dbReference type="GO" id="GO:0030970">
    <property type="term" value="P:retrograde protein transport, ER to cytosol"/>
    <property type="evidence" value="ECO:0000318"/>
    <property type="project" value="GO_Central"/>
</dbReference>
<dbReference type="FunFam" id="2.70.130.10:FF:000001">
    <property type="entry name" value="Endoplasmic reticulum lectin 1"/>
    <property type="match status" value="1"/>
</dbReference>
<dbReference type="FunFam" id="2.70.130.10:FF:000003">
    <property type="entry name" value="Endoplasmic reticulum lectin 1"/>
    <property type="match status" value="1"/>
</dbReference>
<dbReference type="Gene3D" id="2.70.130.10">
    <property type="entry name" value="Mannose-6-phosphate receptor binding domain"/>
    <property type="match status" value="2"/>
</dbReference>
<dbReference type="InterPro" id="IPR009011">
    <property type="entry name" value="Man6P_isomerase_rcpt-bd_dom_sf"/>
</dbReference>
<dbReference type="InterPro" id="IPR044865">
    <property type="entry name" value="MRH_dom"/>
</dbReference>
<dbReference type="InterPro" id="IPR045149">
    <property type="entry name" value="OS-9-like"/>
</dbReference>
<dbReference type="InterPro" id="IPR012913">
    <property type="entry name" value="OS9-like_dom"/>
</dbReference>
<dbReference type="PANTHER" id="PTHR15414:SF0">
    <property type="entry name" value="ENDOPLASMIC RETICULUM LECTIN 1"/>
    <property type="match status" value="1"/>
</dbReference>
<dbReference type="PANTHER" id="PTHR15414">
    <property type="entry name" value="OS-9-RELATED"/>
    <property type="match status" value="1"/>
</dbReference>
<dbReference type="Pfam" id="PF07915">
    <property type="entry name" value="PRKCSH"/>
    <property type="match status" value="2"/>
</dbReference>
<dbReference type="SUPFAM" id="SSF50911">
    <property type="entry name" value="Mannose 6-phosphate receptor domain"/>
    <property type="match status" value="2"/>
</dbReference>
<dbReference type="PROSITE" id="PS51914">
    <property type="entry name" value="MRH"/>
    <property type="match status" value="2"/>
</dbReference>